<accession>P53973</accession>
<accession>D6W1F8</accession>
<keyword id="KW-0002">3D-structure</keyword>
<keyword id="KW-0156">Chromatin regulator</keyword>
<keyword id="KW-0378">Hydrolase</keyword>
<keyword id="KW-0539">Nucleus</keyword>
<keyword id="KW-1185">Reference proteome</keyword>
<keyword id="KW-0678">Repressor</keyword>
<keyword id="KW-0804">Transcription</keyword>
<keyword id="KW-0805">Transcription regulation</keyword>
<proteinExistence type="evidence at protein level"/>
<comment type="function">
    <text>Responsible for the deacetylation of lysine residues on the N-terminal part of the core histones (H2A, H2B, H3 and H4). Histone deacetylation gives a tag for epigenetic repression and plays an important role in transcriptional regulation, cell cycle progression and developmental events. Histone deacetylases act via the formation of large multiprotein complexes.</text>
</comment>
<comment type="catalytic activity">
    <reaction>
        <text>N(6)-acetyl-L-lysyl-[histone] + H2O = L-lysyl-[histone] + acetate</text>
        <dbReference type="Rhea" id="RHEA:58196"/>
        <dbReference type="Rhea" id="RHEA-COMP:9845"/>
        <dbReference type="Rhea" id="RHEA-COMP:11338"/>
        <dbReference type="ChEBI" id="CHEBI:15377"/>
        <dbReference type="ChEBI" id="CHEBI:29969"/>
        <dbReference type="ChEBI" id="CHEBI:30089"/>
        <dbReference type="ChEBI" id="CHEBI:61930"/>
        <dbReference type="EC" id="3.5.1.98"/>
    </reaction>
</comment>
<comment type="interaction">
    <interactant intactId="EBI-8206">
        <id>P53973</id>
    </interactant>
    <interactant intactId="EBI-8206">
        <id>P53973</id>
        <label>HDA1</label>
    </interactant>
    <organismsDiffer>false</organismsDiffer>
    <experiments>4</experiments>
</comment>
<comment type="interaction">
    <interactant intactId="EBI-8206">
        <id>P53973</id>
    </interactant>
    <interactant intactId="EBI-32800">
        <id>Q06629</id>
        <label>HDA2</label>
    </interactant>
    <organismsDiffer>false</organismsDiffer>
    <experiments>7</experiments>
</comment>
<comment type="interaction">
    <interactant intactId="EBI-8206">
        <id>P53973</id>
    </interactant>
    <interactant intactId="EBI-38663">
        <id>Q06623</id>
        <label>HDA3</label>
    </interactant>
    <organismsDiffer>false</organismsDiffer>
    <experiments>7</experiments>
</comment>
<comment type="subcellular location">
    <subcellularLocation>
        <location>Nucleus</location>
    </subcellularLocation>
</comment>
<comment type="miscellaneous">
    <text evidence="3">Present with 3050 molecules/cell in log phase SD medium.</text>
</comment>
<comment type="similarity">
    <text evidence="4">Belongs to the histone deacetylase family. HD type 2 subfamily.</text>
</comment>
<evidence type="ECO:0000250" key="1"/>
<evidence type="ECO:0000256" key="2">
    <source>
        <dbReference type="SAM" id="MobiDB-lite"/>
    </source>
</evidence>
<evidence type="ECO:0000269" key="3">
    <source>
    </source>
</evidence>
<evidence type="ECO:0000305" key="4"/>
<evidence type="ECO:0007829" key="5">
    <source>
        <dbReference type="PDB" id="5J8J"/>
    </source>
</evidence>
<organism>
    <name type="scientific">Saccharomyces cerevisiae (strain ATCC 204508 / S288c)</name>
    <name type="common">Baker's yeast</name>
    <dbReference type="NCBI Taxonomy" id="559292"/>
    <lineage>
        <taxon>Eukaryota</taxon>
        <taxon>Fungi</taxon>
        <taxon>Dikarya</taxon>
        <taxon>Ascomycota</taxon>
        <taxon>Saccharomycotina</taxon>
        <taxon>Saccharomycetes</taxon>
        <taxon>Saccharomycetales</taxon>
        <taxon>Saccharomycetaceae</taxon>
        <taxon>Saccharomyces</taxon>
    </lineage>
</organism>
<reference key="1">
    <citation type="journal article" date="1997" name="Nature">
        <title>The nucleotide sequence of Saccharomyces cerevisiae chromosome XIV and its evolutionary implications.</title>
        <authorList>
            <person name="Philippsen P."/>
            <person name="Kleine K."/>
            <person name="Poehlmann R."/>
            <person name="Duesterhoeft A."/>
            <person name="Hamberg K."/>
            <person name="Hegemann J.H."/>
            <person name="Obermaier B."/>
            <person name="Urrestarazu L.A."/>
            <person name="Aert R."/>
            <person name="Albermann K."/>
            <person name="Altmann R."/>
            <person name="Andre B."/>
            <person name="Baladron V."/>
            <person name="Ballesta J.P.G."/>
            <person name="Becam A.-M."/>
            <person name="Beinhauer J.D."/>
            <person name="Boskovic J."/>
            <person name="Buitrago M.J."/>
            <person name="Bussereau F."/>
            <person name="Coster F."/>
            <person name="Crouzet M."/>
            <person name="D'Angelo M."/>
            <person name="Dal Pero F."/>
            <person name="De Antoni A."/>
            <person name="del Rey F."/>
            <person name="Doignon F."/>
            <person name="Domdey H."/>
            <person name="Dubois E."/>
            <person name="Fiedler T.A."/>
            <person name="Fleig U."/>
            <person name="Floeth M."/>
            <person name="Fritz C."/>
            <person name="Gaillardin C."/>
            <person name="Garcia-Cantalejo J.M."/>
            <person name="Glansdorff N."/>
            <person name="Goffeau A."/>
            <person name="Gueldener U."/>
            <person name="Herbert C.J."/>
            <person name="Heumann K."/>
            <person name="Heuss-Neitzel D."/>
            <person name="Hilbert H."/>
            <person name="Hinni K."/>
            <person name="Iraqui Houssaini I."/>
            <person name="Jacquet M."/>
            <person name="Jimenez A."/>
            <person name="Jonniaux J.-L."/>
            <person name="Karpfinger-Hartl L."/>
            <person name="Lanfranchi G."/>
            <person name="Lepingle A."/>
            <person name="Levesque H."/>
            <person name="Lyck R."/>
            <person name="Maftahi M."/>
            <person name="Mallet L."/>
            <person name="Maurer C.T.C."/>
            <person name="Messenguy F."/>
            <person name="Mewes H.-W."/>
            <person name="Moestl D."/>
            <person name="Nasr F."/>
            <person name="Nicaud J.-M."/>
            <person name="Niedenthal R.K."/>
            <person name="Pandolfo D."/>
            <person name="Pierard A."/>
            <person name="Piravandi E."/>
            <person name="Planta R.J."/>
            <person name="Pohl T.M."/>
            <person name="Purnelle B."/>
            <person name="Rebischung C."/>
            <person name="Remacha M.A."/>
            <person name="Revuelta J.L."/>
            <person name="Rinke M."/>
            <person name="Saiz J.E."/>
            <person name="Sartorello F."/>
            <person name="Scherens B."/>
            <person name="Sen-Gupta M."/>
            <person name="Soler-Mira A."/>
            <person name="Urbanus J.H.M."/>
            <person name="Valle G."/>
            <person name="Van Dyck L."/>
            <person name="Verhasselt P."/>
            <person name="Vierendeels F."/>
            <person name="Vissers S."/>
            <person name="Voet M."/>
            <person name="Volckaert G."/>
            <person name="Wach A."/>
            <person name="Wambutt R."/>
            <person name="Wedler H."/>
            <person name="Zollner A."/>
            <person name="Hani J."/>
        </authorList>
    </citation>
    <scope>NUCLEOTIDE SEQUENCE [LARGE SCALE GENOMIC DNA]</scope>
    <source>
        <strain>ATCC 204508 / S288c</strain>
    </source>
</reference>
<reference key="2">
    <citation type="journal article" date="2014" name="G3 (Bethesda)">
        <title>The reference genome sequence of Saccharomyces cerevisiae: Then and now.</title>
        <authorList>
            <person name="Engel S.R."/>
            <person name="Dietrich F.S."/>
            <person name="Fisk D.G."/>
            <person name="Binkley G."/>
            <person name="Balakrishnan R."/>
            <person name="Costanzo M.C."/>
            <person name="Dwight S.S."/>
            <person name="Hitz B.C."/>
            <person name="Karra K."/>
            <person name="Nash R.S."/>
            <person name="Weng S."/>
            <person name="Wong E.D."/>
            <person name="Lloyd P."/>
            <person name="Skrzypek M.S."/>
            <person name="Miyasato S.R."/>
            <person name="Simison M."/>
            <person name="Cherry J.M."/>
        </authorList>
    </citation>
    <scope>GENOME REANNOTATION</scope>
    <source>
        <strain>ATCC 204508 / S288c</strain>
    </source>
</reference>
<reference key="3">
    <citation type="journal article" date="1996" name="Proc. Natl. Acad. Sci. U.S.A.">
        <title>HDA1 and RPD3 are members of distinct yeast histone deacetylase complexes that regulate silencing and transcription.</title>
        <authorList>
            <person name="Rundlett S.E."/>
            <person name="Carmen A.A."/>
            <person name="Kobayashi R."/>
            <person name="Bavykin S."/>
            <person name="Turner B.M."/>
            <person name="Grunstein M."/>
        </authorList>
    </citation>
    <scope>CHARACTERIZATION</scope>
</reference>
<reference key="4">
    <citation type="journal article" date="2003" name="Nature">
        <title>Global analysis of protein expression in yeast.</title>
        <authorList>
            <person name="Ghaemmaghami S."/>
            <person name="Huh W.-K."/>
            <person name="Bower K."/>
            <person name="Howson R.W."/>
            <person name="Belle A."/>
            <person name="Dephoure N."/>
            <person name="O'Shea E.K."/>
            <person name="Weissman J.S."/>
        </authorList>
    </citation>
    <scope>LEVEL OF PROTEIN EXPRESSION [LARGE SCALE ANALYSIS]</scope>
</reference>
<feature type="chain" id="PRO_0000114738" description="Histone deacetylase HDA1">
    <location>
        <begin position="1"/>
        <end position="706"/>
    </location>
</feature>
<feature type="region of interest" description="Disordered" evidence="2">
    <location>
        <begin position="1"/>
        <end position="36"/>
    </location>
</feature>
<feature type="region of interest" description="Histone deacetylase">
    <location>
        <begin position="67"/>
        <end position="396"/>
    </location>
</feature>
<feature type="compositionally biased region" description="Basic and acidic residues" evidence="2">
    <location>
        <begin position="1"/>
        <end position="24"/>
    </location>
</feature>
<feature type="active site" evidence="1">
    <location>
        <position position="206"/>
    </location>
</feature>
<feature type="helix" evidence="5">
    <location>
        <begin position="457"/>
        <end position="473"/>
    </location>
</feature>
<feature type="strand" evidence="5">
    <location>
        <begin position="483"/>
        <end position="485"/>
    </location>
</feature>
<feature type="helix" evidence="5">
    <location>
        <begin position="487"/>
        <end position="489"/>
    </location>
</feature>
<feature type="strand" evidence="5">
    <location>
        <begin position="490"/>
        <end position="492"/>
    </location>
</feature>
<feature type="helix" evidence="5">
    <location>
        <begin position="496"/>
        <end position="498"/>
    </location>
</feature>
<feature type="strand" evidence="5">
    <location>
        <begin position="500"/>
        <end position="508"/>
    </location>
</feature>
<feature type="strand" evidence="5">
    <location>
        <begin position="511"/>
        <end position="513"/>
    </location>
</feature>
<feature type="turn" evidence="5">
    <location>
        <begin position="518"/>
        <end position="520"/>
    </location>
</feature>
<feature type="helix" evidence="5">
    <location>
        <begin position="525"/>
        <end position="527"/>
    </location>
</feature>
<feature type="strand" evidence="5">
    <location>
        <begin position="529"/>
        <end position="531"/>
    </location>
</feature>
<feature type="helix" evidence="5">
    <location>
        <begin position="535"/>
        <end position="542"/>
    </location>
</feature>
<feature type="turn" evidence="5">
    <location>
        <begin position="543"/>
        <end position="545"/>
    </location>
</feature>
<feature type="strand" evidence="5">
    <location>
        <begin position="547"/>
        <end position="553"/>
    </location>
</feature>
<feature type="strand" evidence="5">
    <location>
        <begin position="558"/>
        <end position="561"/>
    </location>
</feature>
<feature type="helix" evidence="5">
    <location>
        <begin position="563"/>
        <end position="579"/>
    </location>
</feature>
<feature type="turn" evidence="5">
    <location>
        <begin position="580"/>
        <end position="583"/>
    </location>
</feature>
<feature type="strand" evidence="5">
    <location>
        <begin position="590"/>
        <end position="595"/>
    </location>
</feature>
<feature type="helix" evidence="5">
    <location>
        <begin position="596"/>
        <end position="598"/>
    </location>
</feature>
<feature type="helix" evidence="5">
    <location>
        <begin position="599"/>
        <end position="608"/>
    </location>
</feature>
<feature type="turn" evidence="5">
    <location>
        <begin position="612"/>
        <end position="614"/>
    </location>
</feature>
<feature type="strand" evidence="5">
    <location>
        <begin position="615"/>
        <end position="623"/>
    </location>
</feature>
<feature type="helix" evidence="5">
    <location>
        <begin position="637"/>
        <end position="644"/>
    </location>
</feature>
<feature type="strand" evidence="5">
    <location>
        <begin position="646"/>
        <end position="650"/>
    </location>
</feature>
<feature type="helix" evidence="5">
    <location>
        <begin position="667"/>
        <end position="669"/>
    </location>
</feature>
<feature type="strand" evidence="5">
    <location>
        <begin position="672"/>
        <end position="674"/>
    </location>
</feature>
<feature type="helix" evidence="5">
    <location>
        <begin position="680"/>
        <end position="696"/>
    </location>
</feature>
<protein>
    <recommendedName>
        <fullName>Histone deacetylase HDA1</fullName>
        <ecNumber>3.5.1.98</ecNumber>
    </recommendedName>
</protein>
<dbReference type="EC" id="3.5.1.98"/>
<dbReference type="EMBL" id="Z71297">
    <property type="protein sequence ID" value="CAA95883.1"/>
    <property type="molecule type" value="Genomic_DNA"/>
</dbReference>
<dbReference type="EMBL" id="BK006947">
    <property type="protein sequence ID" value="DAA10524.1"/>
    <property type="molecule type" value="Genomic_DNA"/>
</dbReference>
<dbReference type="PIR" id="S62933">
    <property type="entry name" value="S62933"/>
</dbReference>
<dbReference type="RefSeq" id="NP_014377.1">
    <property type="nucleotide sequence ID" value="NM_001182860.1"/>
</dbReference>
<dbReference type="PDB" id="5J8J">
    <property type="method" value="X-ray"/>
    <property type="resolution" value="2.72 A"/>
    <property type="chains" value="A=457-698"/>
</dbReference>
<dbReference type="PDBsum" id="5J8J"/>
<dbReference type="EMDB" id="EMD-11092"/>
<dbReference type="EMDB" id="EMD-11094"/>
<dbReference type="EMDB" id="EMD-11101"/>
<dbReference type="EMDB" id="EMD-11102"/>
<dbReference type="SMR" id="P53973"/>
<dbReference type="BioGRID" id="35805">
    <property type="interactions" value="759"/>
</dbReference>
<dbReference type="ComplexPortal" id="CPX-1884">
    <property type="entry name" value="HDA1 histone deacetylase complex"/>
</dbReference>
<dbReference type="DIP" id="DIP-1360N"/>
<dbReference type="FunCoup" id="P53973">
    <property type="interactions" value="192"/>
</dbReference>
<dbReference type="IntAct" id="P53973">
    <property type="interactions" value="18"/>
</dbReference>
<dbReference type="MINT" id="P53973"/>
<dbReference type="STRING" id="4932.YNL021W"/>
<dbReference type="ESTHER" id="yeast-hda1">
    <property type="family name" value="Arb2_domain"/>
</dbReference>
<dbReference type="GlyGen" id="P53973">
    <property type="glycosylation" value="1 site"/>
</dbReference>
<dbReference type="iPTMnet" id="P53973"/>
<dbReference type="PaxDb" id="4932-YNL021W"/>
<dbReference type="PeptideAtlas" id="P53973"/>
<dbReference type="EnsemblFungi" id="YNL021W_mRNA">
    <property type="protein sequence ID" value="YNL021W"/>
    <property type="gene ID" value="YNL021W"/>
</dbReference>
<dbReference type="GeneID" id="855710"/>
<dbReference type="KEGG" id="sce:YNL021W"/>
<dbReference type="AGR" id="SGD:S000004966"/>
<dbReference type="SGD" id="S000004966">
    <property type="gene designation" value="HDA1"/>
</dbReference>
<dbReference type="VEuPathDB" id="FungiDB:YNL021W"/>
<dbReference type="eggNOG" id="KOG1343">
    <property type="taxonomic scope" value="Eukaryota"/>
</dbReference>
<dbReference type="GeneTree" id="ENSGT00940000159563"/>
<dbReference type="HOGENOM" id="CLU_007727_4_0_1"/>
<dbReference type="InParanoid" id="P53973"/>
<dbReference type="OMA" id="CFVSPAC"/>
<dbReference type="OrthoDB" id="424012at2759"/>
<dbReference type="BioCyc" id="YEAST:G3O-33059-MONOMER"/>
<dbReference type="BRENDA" id="3.5.1.98">
    <property type="organism ID" value="984"/>
</dbReference>
<dbReference type="Reactome" id="R-SCE-3214815">
    <property type="pathway name" value="HDACs deacetylate histones"/>
</dbReference>
<dbReference type="Reactome" id="R-SCE-3371511">
    <property type="pathway name" value="HSF1 activation"/>
</dbReference>
<dbReference type="Reactome" id="R-SCE-4551638">
    <property type="pathway name" value="SUMOylation of chromatin organization proteins"/>
</dbReference>
<dbReference type="BioGRID-ORCS" id="855710">
    <property type="hits" value="0 hits in 10 CRISPR screens"/>
</dbReference>
<dbReference type="PRO" id="PR:P53973"/>
<dbReference type="Proteomes" id="UP000002311">
    <property type="component" value="Chromosome XIV"/>
</dbReference>
<dbReference type="RNAct" id="P53973">
    <property type="molecule type" value="protein"/>
</dbReference>
<dbReference type="GO" id="GO:0070823">
    <property type="term" value="C:HDA1 complex"/>
    <property type="evidence" value="ECO:0000314"/>
    <property type="project" value="SGD"/>
</dbReference>
<dbReference type="GO" id="GO:0000118">
    <property type="term" value="C:histone deacetylase complex"/>
    <property type="evidence" value="ECO:0000318"/>
    <property type="project" value="GO_Central"/>
</dbReference>
<dbReference type="GO" id="GO:0003682">
    <property type="term" value="F:chromatin binding"/>
    <property type="evidence" value="ECO:0000314"/>
    <property type="project" value="SGD"/>
</dbReference>
<dbReference type="GO" id="GO:0141221">
    <property type="term" value="F:histone deacetylase activity, hydrolytic mechanism"/>
    <property type="evidence" value="ECO:0007669"/>
    <property type="project" value="UniProtKB-EC"/>
</dbReference>
<dbReference type="GO" id="GO:0042802">
    <property type="term" value="F:identical protein binding"/>
    <property type="evidence" value="ECO:0000353"/>
    <property type="project" value="IntAct"/>
</dbReference>
<dbReference type="GO" id="GO:0040029">
    <property type="term" value="P:epigenetic regulation of gene expression"/>
    <property type="evidence" value="ECO:0000318"/>
    <property type="project" value="GO_Central"/>
</dbReference>
<dbReference type="GO" id="GO:0000122">
    <property type="term" value="P:negative regulation of transcription by RNA polymerase II"/>
    <property type="evidence" value="ECO:0000314"/>
    <property type="project" value="ComplexPortal"/>
</dbReference>
<dbReference type="GO" id="GO:0010621">
    <property type="term" value="P:negative regulation of transcription by transcription factor localization"/>
    <property type="evidence" value="ECO:0000316"/>
    <property type="project" value="SGD"/>
</dbReference>
<dbReference type="GO" id="GO:0045944">
    <property type="term" value="P:positive regulation of transcription by RNA polymerase II"/>
    <property type="evidence" value="ECO:0000315"/>
    <property type="project" value="SGD"/>
</dbReference>
<dbReference type="CDD" id="cd11600">
    <property type="entry name" value="HDAC_Clr3"/>
    <property type="match status" value="1"/>
</dbReference>
<dbReference type="FunFam" id="3.40.800.20:FF:000005">
    <property type="entry name" value="histone deacetylase 6"/>
    <property type="match status" value="1"/>
</dbReference>
<dbReference type="Gene3D" id="3.40.800.20">
    <property type="entry name" value="Histone deacetylase domain"/>
    <property type="match status" value="1"/>
</dbReference>
<dbReference type="InterPro" id="IPR019154">
    <property type="entry name" value="Arb2-like_domain"/>
</dbReference>
<dbReference type="InterPro" id="IPR050284">
    <property type="entry name" value="HDAC_PDAC"/>
</dbReference>
<dbReference type="InterPro" id="IPR000286">
    <property type="entry name" value="His_deacetylse"/>
</dbReference>
<dbReference type="InterPro" id="IPR023801">
    <property type="entry name" value="His_deacetylse_dom"/>
</dbReference>
<dbReference type="InterPro" id="IPR037138">
    <property type="entry name" value="His_deacetylse_dom_sf"/>
</dbReference>
<dbReference type="InterPro" id="IPR017321">
    <property type="entry name" value="Hist_deAcase_II_yeast"/>
</dbReference>
<dbReference type="InterPro" id="IPR023696">
    <property type="entry name" value="Ureohydrolase_dom_sf"/>
</dbReference>
<dbReference type="PANTHER" id="PTHR10625:SF5">
    <property type="entry name" value="HISTONE DEACETYLASE"/>
    <property type="match status" value="1"/>
</dbReference>
<dbReference type="PANTHER" id="PTHR10625">
    <property type="entry name" value="HISTONE DEACETYLASE HDAC1-RELATED"/>
    <property type="match status" value="1"/>
</dbReference>
<dbReference type="Pfam" id="PF09757">
    <property type="entry name" value="Arb2-like"/>
    <property type="match status" value="1"/>
</dbReference>
<dbReference type="Pfam" id="PF00850">
    <property type="entry name" value="Hist_deacetyl"/>
    <property type="match status" value="1"/>
</dbReference>
<dbReference type="PIRSF" id="PIRSF037919">
    <property type="entry name" value="HDAC_II_yeast"/>
    <property type="match status" value="1"/>
</dbReference>
<dbReference type="PRINTS" id="PR01270">
    <property type="entry name" value="HDASUPER"/>
</dbReference>
<dbReference type="SUPFAM" id="SSF52768">
    <property type="entry name" value="Arginase/deacetylase"/>
    <property type="match status" value="1"/>
</dbReference>
<sequence length="706" mass="80070">MDSVMVKKEVLENPDHDLKRKLEENKEEENSLSTTSKSKRQVIVPVCMPKIHYSPLKTGLCYDVRMRYHAKIFTSYFEYIDPHPEDPRRIYRIYKILAENGLINDPTLSGVDDLGDLMLKIPVRAATSEEILEVHTKEHLEFIESTEKMSREELLKETEKGDSVYFNNDSYASARLPCGGAIEACKAVVEGRVKNSLAVVRPPGHHAEPQAAGGFCLFSNVAVAAKNILKNYPESVRRIMILDWDIHHGNGTQKSFYQDDQVLYVSLHRFEMGKYYPGTIQGQYDQTGEGKGEGFNCNITWPVGGVGDAEYMWAFEQVVMPMGREFKPDLVIISSGFDAADGDTIGQCHVTPSCYGHMTHMLKSLARGNLCVVLEGGYNLDAIARSALSVAKVLIGEPPDELPDPLSDPKPEVIEMIDKVIRLQSKYWNCFRRRHANSGCNFNEPINDSIISKNFPLQKAIRQQQQHYLSDEFNFVTLPLVSMDLPDNTVLCTPNISESNTIIIVVHDTSDIWAKRNVISGTIDLSSSVIIDNSLDFIKWGLDRKYGIIDVNIPLTLFEPDNYSGMITSQEVLIYLWDNYIKYFPSVAKIAFIGIGDSYSGIVHLLGHRDTRAVTKTVINFLGDKQLKPLVPLVDETLSEWYFKNSLIFSNNSHQCWKENESRKPRKKFGRVLRCDTDGLNNIIEERFEEATDFILDSFEEWSDEE</sequence>
<gene>
    <name type="primary">HDA1</name>
    <name type="ordered locus">YNL021W</name>
    <name type="ORF">N2819</name>
</gene>
<name>HDA1_YEAST</name>